<organism>
    <name type="scientific">Mus musculus</name>
    <name type="common">Mouse</name>
    <dbReference type="NCBI Taxonomy" id="10090"/>
    <lineage>
        <taxon>Eukaryota</taxon>
        <taxon>Metazoa</taxon>
        <taxon>Chordata</taxon>
        <taxon>Craniata</taxon>
        <taxon>Vertebrata</taxon>
        <taxon>Euteleostomi</taxon>
        <taxon>Mammalia</taxon>
        <taxon>Eutheria</taxon>
        <taxon>Euarchontoglires</taxon>
        <taxon>Glires</taxon>
        <taxon>Rodentia</taxon>
        <taxon>Myomorpha</taxon>
        <taxon>Muroidea</taxon>
        <taxon>Muridae</taxon>
        <taxon>Murinae</taxon>
        <taxon>Mus</taxon>
        <taxon>Mus</taxon>
    </lineage>
</organism>
<dbReference type="EC" id="3.4.14.2"/>
<dbReference type="EMBL" id="AF285235">
    <property type="protein sequence ID" value="AAG01154.1"/>
    <property type="molecule type" value="mRNA"/>
</dbReference>
<dbReference type="EMBL" id="AL732557">
    <property type="status" value="NOT_ANNOTATED_CDS"/>
    <property type="molecule type" value="Genomic_DNA"/>
</dbReference>
<dbReference type="EMBL" id="CH466542">
    <property type="protein sequence ID" value="EDL08237.1"/>
    <property type="molecule type" value="Genomic_DNA"/>
</dbReference>
<dbReference type="EMBL" id="BC027205">
    <property type="protein sequence ID" value="AAH27205.1"/>
    <property type="molecule type" value="mRNA"/>
</dbReference>
<dbReference type="CCDS" id="CCDS15766.1"/>
<dbReference type="RefSeq" id="NP_114031.2">
    <property type="nucleotide sequence ID" value="NM_031843.2"/>
</dbReference>
<dbReference type="SMR" id="Q9ET22"/>
<dbReference type="BioGRID" id="219972">
    <property type="interactions" value="20"/>
</dbReference>
<dbReference type="FunCoup" id="Q9ET22">
    <property type="interactions" value="776"/>
</dbReference>
<dbReference type="STRING" id="10090.ENSMUSP00000028332"/>
<dbReference type="ChEMBL" id="CHEMBL3259501"/>
<dbReference type="ESTHER" id="mouse-dpp2">
    <property type="family name" value="Prolylcarboxypeptidase"/>
</dbReference>
<dbReference type="MEROPS" id="S28.002"/>
<dbReference type="GlyConnect" id="2256">
    <property type="glycosylation" value="2 N-Linked glycans (2 sites)"/>
</dbReference>
<dbReference type="GlyCosmos" id="Q9ET22">
    <property type="glycosylation" value="6 sites, 2 glycans"/>
</dbReference>
<dbReference type="GlyGen" id="Q9ET22">
    <property type="glycosylation" value="6 sites, 3 N-linked glycans (2 sites)"/>
</dbReference>
<dbReference type="iPTMnet" id="Q9ET22"/>
<dbReference type="PhosphoSitePlus" id="Q9ET22"/>
<dbReference type="SwissPalm" id="Q9ET22"/>
<dbReference type="jPOST" id="Q9ET22"/>
<dbReference type="PaxDb" id="10090-ENSMUSP00000028332"/>
<dbReference type="PeptideAtlas" id="Q9ET22"/>
<dbReference type="ProteomicsDB" id="277600"/>
<dbReference type="Pumba" id="Q9ET22"/>
<dbReference type="Antibodypedia" id="18905">
    <property type="antibodies" value="284 antibodies from 32 providers"/>
</dbReference>
<dbReference type="DNASU" id="83768"/>
<dbReference type="Ensembl" id="ENSMUST00000028332.8">
    <property type="protein sequence ID" value="ENSMUSP00000028332.8"/>
    <property type="gene ID" value="ENSMUSG00000026958.14"/>
</dbReference>
<dbReference type="GeneID" id="83768"/>
<dbReference type="KEGG" id="mmu:83768"/>
<dbReference type="UCSC" id="uc008irq.1">
    <property type="organism name" value="mouse"/>
</dbReference>
<dbReference type="AGR" id="MGI:1933213"/>
<dbReference type="CTD" id="29952"/>
<dbReference type="MGI" id="MGI:1933213">
    <property type="gene designation" value="Dpp7"/>
</dbReference>
<dbReference type="VEuPathDB" id="HostDB:ENSMUSG00000026958"/>
<dbReference type="eggNOG" id="KOG2183">
    <property type="taxonomic scope" value="Eukaryota"/>
</dbReference>
<dbReference type="GeneTree" id="ENSGT00940000159838"/>
<dbReference type="HOGENOM" id="CLU_020959_0_0_1"/>
<dbReference type="InParanoid" id="Q9ET22"/>
<dbReference type="OMA" id="ELYMPMS"/>
<dbReference type="OrthoDB" id="1735038at2759"/>
<dbReference type="PhylomeDB" id="Q9ET22"/>
<dbReference type="TreeFam" id="TF314414"/>
<dbReference type="Reactome" id="R-MMU-6798695">
    <property type="pathway name" value="Neutrophil degranulation"/>
</dbReference>
<dbReference type="BioGRID-ORCS" id="83768">
    <property type="hits" value="6 hits in 78 CRISPR screens"/>
</dbReference>
<dbReference type="ChiTaRS" id="Dpp7">
    <property type="organism name" value="mouse"/>
</dbReference>
<dbReference type="PRO" id="PR:Q9ET22"/>
<dbReference type="Proteomes" id="UP000000589">
    <property type="component" value="Chromosome 2"/>
</dbReference>
<dbReference type="RNAct" id="Q9ET22">
    <property type="molecule type" value="protein"/>
</dbReference>
<dbReference type="Bgee" id="ENSMUSG00000026958">
    <property type="expression patterns" value="Expressed in choroid plexus of fourth ventricle and 251 other cell types or tissues"/>
</dbReference>
<dbReference type="GO" id="GO:0031410">
    <property type="term" value="C:cytoplasmic vesicle"/>
    <property type="evidence" value="ECO:0007669"/>
    <property type="project" value="UniProtKB-KW"/>
</dbReference>
<dbReference type="GO" id="GO:0005576">
    <property type="term" value="C:extracellular region"/>
    <property type="evidence" value="ECO:0007669"/>
    <property type="project" value="UniProtKB-SubCell"/>
</dbReference>
<dbReference type="GO" id="GO:0005794">
    <property type="term" value="C:Golgi apparatus"/>
    <property type="evidence" value="ECO:0007669"/>
    <property type="project" value="Ensembl"/>
</dbReference>
<dbReference type="GO" id="GO:0005764">
    <property type="term" value="C:lysosome"/>
    <property type="evidence" value="ECO:0000314"/>
    <property type="project" value="MGI"/>
</dbReference>
<dbReference type="GO" id="GO:0004177">
    <property type="term" value="F:aminopeptidase activity"/>
    <property type="evidence" value="ECO:0007669"/>
    <property type="project" value="UniProtKB-KW"/>
</dbReference>
<dbReference type="GO" id="GO:0008239">
    <property type="term" value="F:dipeptidyl-peptidase activity"/>
    <property type="evidence" value="ECO:0000314"/>
    <property type="project" value="MGI"/>
</dbReference>
<dbReference type="GO" id="GO:0070008">
    <property type="term" value="F:serine-type exopeptidase activity"/>
    <property type="evidence" value="ECO:0007669"/>
    <property type="project" value="InterPro"/>
</dbReference>
<dbReference type="GO" id="GO:1905146">
    <property type="term" value="P:lysosomal protein catabolic process"/>
    <property type="evidence" value="ECO:0000315"/>
    <property type="project" value="MGI"/>
</dbReference>
<dbReference type="GO" id="GO:0006508">
    <property type="term" value="P:proteolysis"/>
    <property type="evidence" value="ECO:0007669"/>
    <property type="project" value="UniProtKB-KW"/>
</dbReference>
<dbReference type="FunFam" id="3.40.50.1820:FF:000484">
    <property type="entry name" value="Dipeptidyl peptidase 2"/>
    <property type="match status" value="2"/>
</dbReference>
<dbReference type="FunFam" id="1.20.120.980:FF:000001">
    <property type="entry name" value="Dipeptidyl peptidase 7"/>
    <property type="match status" value="1"/>
</dbReference>
<dbReference type="Gene3D" id="3.40.50.1820">
    <property type="entry name" value="alpha/beta hydrolase"/>
    <property type="match status" value="1"/>
</dbReference>
<dbReference type="Gene3D" id="1.20.120.980">
    <property type="entry name" value="Serine carboxypeptidase S28, SKS domain"/>
    <property type="match status" value="1"/>
</dbReference>
<dbReference type="InterPro" id="IPR029058">
    <property type="entry name" value="AB_hydrolase_fold"/>
</dbReference>
<dbReference type="InterPro" id="IPR008758">
    <property type="entry name" value="Peptidase_S28"/>
</dbReference>
<dbReference type="InterPro" id="IPR042269">
    <property type="entry name" value="Ser_carbopepase_S28_SKS"/>
</dbReference>
<dbReference type="PANTHER" id="PTHR11010:SF107">
    <property type="entry name" value="DIPEPTIDYL PEPTIDASE 2"/>
    <property type="match status" value="1"/>
</dbReference>
<dbReference type="PANTHER" id="PTHR11010">
    <property type="entry name" value="PROTEASE S28 PRO-X CARBOXYPEPTIDASE-RELATED"/>
    <property type="match status" value="1"/>
</dbReference>
<dbReference type="Pfam" id="PF05577">
    <property type="entry name" value="Peptidase_S28"/>
    <property type="match status" value="1"/>
</dbReference>
<dbReference type="SUPFAM" id="SSF53474">
    <property type="entry name" value="alpha/beta-Hydrolases"/>
    <property type="match status" value="1"/>
</dbReference>
<proteinExistence type="evidence at protein level"/>
<protein>
    <recommendedName>
        <fullName>Dipeptidyl peptidase 2</fullName>
        <ecNumber>3.4.14.2</ecNumber>
    </recommendedName>
    <alternativeName>
        <fullName>Dipeptidyl aminopeptidase II</fullName>
    </alternativeName>
    <alternativeName>
        <fullName>Dipeptidyl peptidase 7</fullName>
    </alternativeName>
    <alternativeName>
        <fullName>Dipeptidyl peptidase II</fullName>
        <shortName>DPP II</shortName>
    </alternativeName>
    <alternativeName>
        <fullName>Quiescent cell proline dipeptidase</fullName>
    </alternativeName>
</protein>
<gene>
    <name type="primary">Dpp7</name>
    <name type="synonym">Dpp2</name>
    <name type="synonym">Qpp</name>
</gene>
<feature type="signal peptide" evidence="2">
    <location>
        <begin position="1"/>
        <end position="33"/>
    </location>
</feature>
<feature type="propeptide" id="PRO_0000027316" evidence="1">
    <location>
        <begin position="34"/>
        <end position="36"/>
    </location>
</feature>
<feature type="chain" id="PRO_0000027317" description="Dipeptidyl peptidase 2">
    <location>
        <begin position="37"/>
        <end position="506"/>
    </location>
</feature>
<feature type="active site" description="Charge relay system" evidence="2">
    <location>
        <position position="172"/>
    </location>
</feature>
<feature type="active site" description="Charge relay system" evidence="2">
    <location>
        <position position="428"/>
    </location>
</feature>
<feature type="active site" description="Charge relay system" evidence="2">
    <location>
        <position position="453"/>
    </location>
</feature>
<feature type="glycosylation site" description="N-linked (GlcNAc...) asparagine" evidence="2">
    <location>
        <position position="60"/>
    </location>
</feature>
<feature type="glycosylation site" description="N-linked (GlcNAc...) asparagine" evidence="2">
    <location>
        <position position="96"/>
    </location>
</feature>
<feature type="glycosylation site" description="N-linked (GlcNAc...) asparagine" evidence="2">
    <location>
        <position position="325"/>
    </location>
</feature>
<feature type="glycosylation site" description="N-linked (GlcNAc...) asparagine" evidence="2">
    <location>
        <position position="366"/>
    </location>
</feature>
<feature type="glycosylation site" description="N-linked (GlcNAc...) asparagine" evidence="2">
    <location>
        <position position="373"/>
    </location>
</feature>
<feature type="glycosylation site" description="N-linked (GlcNAc...) asparagine" evidence="2">
    <location>
        <position position="438"/>
    </location>
</feature>
<feature type="sequence conflict" description="In Ref. 1; AAG01154." evidence="3" ref="1">
    <original>P</original>
    <variation>L</variation>
    <location>
        <position position="497"/>
    </location>
</feature>
<sequence length="506" mass="56254">MNFHPCYPVDHGVPSWILVLLLSLGLCNLQARADRVLDPDFHENYFEQYMDHFNFESFGNKTFGQRFLVSDKFWKMGEGPIFFYTGNEGDIWSFANNSGFMVELAAQQEALLVFAEHRYYGKSLPFGVQSTQRGYTQLLTVEQALADFAVLLQALRQDLGVHDAPTIAFGGSYGGMLSAYMRMKYPHLVAGALAASAPVVAVAGLGDSYQFFRDVTADFYGQSPKCAQAVRDAFQQIKDLFLQGAYDTISQNFGTCQSLSSPKDLTQLFGFARNAFTVLAMMDYPYPTDFLGPLPANPVKVGCQRLLNEGQRIMGLRALAGLVYNSSGTEPCYDIYRLYQSCADPTGCGTGSDARAWDYQACTEINLTFDSNNVTDMFPEIPFSEELRQQYCLDTWGVWPRQDWLQTSFWGGDLKAASNIIFSNGDLDPWAGGGIQSNLSTSVIAVTIQGGAHHLDLRASNSEDPPSVVEVRKLESTLIREWVAAARLKQPAMPRWPGPKKQHPSR</sequence>
<comment type="function">
    <text>Plays an important role in the degradation of some oligopeptides.</text>
</comment>
<comment type="catalytic activity">
    <reaction>
        <text>Release of an N-terminal dipeptide, Xaa-Yaa-|-, preferentially when Yaa is Ala or Pro. Substrates are oligopeptides, preferentially tripeptides.</text>
        <dbReference type="EC" id="3.4.14.2"/>
    </reaction>
</comment>
<comment type="subunit">
    <text evidence="1">Homodimer.</text>
</comment>
<comment type="subcellular location">
    <subcellularLocation>
        <location evidence="1">Lysosome</location>
    </subcellularLocation>
    <subcellularLocation>
        <location evidence="1">Cytoplasmic vesicle</location>
    </subcellularLocation>
    <subcellularLocation>
        <location evidence="1">Secreted</location>
    </subcellularLocation>
</comment>
<comment type="similarity">
    <text evidence="3">Belongs to the peptidase S28 family.</text>
</comment>
<evidence type="ECO:0000250" key="1"/>
<evidence type="ECO:0000255" key="2"/>
<evidence type="ECO:0000305" key="3"/>
<reference key="1">
    <citation type="submission" date="2000-07" db="EMBL/GenBank/DDBJ databases">
        <authorList>
            <person name="Bista P."/>
            <person name="Jaison P.L."/>
            <person name="Yardley K."/>
            <person name="Lee H.J."/>
            <person name="Huber B.T."/>
        </authorList>
    </citation>
    <scope>NUCLEOTIDE SEQUENCE [MRNA]</scope>
    <source>
        <strain>129</strain>
    </source>
</reference>
<reference key="2">
    <citation type="journal article" date="2009" name="PLoS Biol.">
        <title>Lineage-specific biology revealed by a finished genome assembly of the mouse.</title>
        <authorList>
            <person name="Church D.M."/>
            <person name="Goodstadt L."/>
            <person name="Hillier L.W."/>
            <person name="Zody M.C."/>
            <person name="Goldstein S."/>
            <person name="She X."/>
            <person name="Bult C.J."/>
            <person name="Agarwala R."/>
            <person name="Cherry J.L."/>
            <person name="DiCuccio M."/>
            <person name="Hlavina W."/>
            <person name="Kapustin Y."/>
            <person name="Meric P."/>
            <person name="Maglott D."/>
            <person name="Birtle Z."/>
            <person name="Marques A.C."/>
            <person name="Graves T."/>
            <person name="Zhou S."/>
            <person name="Teague B."/>
            <person name="Potamousis K."/>
            <person name="Churas C."/>
            <person name="Place M."/>
            <person name="Herschleb J."/>
            <person name="Runnheim R."/>
            <person name="Forrest D."/>
            <person name="Amos-Landgraf J."/>
            <person name="Schwartz D.C."/>
            <person name="Cheng Z."/>
            <person name="Lindblad-Toh K."/>
            <person name="Eichler E.E."/>
            <person name="Ponting C.P."/>
        </authorList>
    </citation>
    <scope>NUCLEOTIDE SEQUENCE [LARGE SCALE GENOMIC DNA]</scope>
    <source>
        <strain>C57BL/6J</strain>
    </source>
</reference>
<reference key="3">
    <citation type="submission" date="2005-07" db="EMBL/GenBank/DDBJ databases">
        <authorList>
            <person name="Mural R.J."/>
            <person name="Adams M.D."/>
            <person name="Myers E.W."/>
            <person name="Smith H.O."/>
            <person name="Venter J.C."/>
        </authorList>
    </citation>
    <scope>NUCLEOTIDE SEQUENCE [LARGE SCALE GENOMIC DNA]</scope>
</reference>
<reference key="4">
    <citation type="journal article" date="2004" name="Genome Res.">
        <title>The status, quality, and expansion of the NIH full-length cDNA project: the Mammalian Gene Collection (MGC).</title>
        <authorList>
            <consortium name="The MGC Project Team"/>
        </authorList>
    </citation>
    <scope>NUCLEOTIDE SEQUENCE [LARGE SCALE MRNA]</scope>
    <source>
        <strain>FVB/N</strain>
        <tissue>Salivary gland</tissue>
    </source>
</reference>
<reference key="5">
    <citation type="journal article" date="2010" name="Cell">
        <title>A tissue-specific atlas of mouse protein phosphorylation and expression.</title>
        <authorList>
            <person name="Huttlin E.L."/>
            <person name="Jedrychowski M.P."/>
            <person name="Elias J.E."/>
            <person name="Goswami T."/>
            <person name="Rad R."/>
            <person name="Beausoleil S.A."/>
            <person name="Villen J."/>
            <person name="Haas W."/>
            <person name="Sowa M.E."/>
            <person name="Gygi S.P."/>
        </authorList>
    </citation>
    <scope>IDENTIFICATION BY MASS SPECTROMETRY [LARGE SCALE ANALYSIS]</scope>
    <source>
        <tissue>Brain</tissue>
        <tissue>Brown adipose tissue</tissue>
        <tissue>Kidney</tissue>
        <tissue>Liver</tissue>
        <tissue>Lung</tissue>
        <tissue>Pancreas</tissue>
        <tissue>Spleen</tissue>
    </source>
</reference>
<accession>Q9ET22</accession>
<accession>Q8R082</accession>
<keyword id="KW-0031">Aminopeptidase</keyword>
<keyword id="KW-0968">Cytoplasmic vesicle</keyword>
<keyword id="KW-0325">Glycoprotein</keyword>
<keyword id="KW-0378">Hydrolase</keyword>
<keyword id="KW-0458">Lysosome</keyword>
<keyword id="KW-0645">Protease</keyword>
<keyword id="KW-1185">Reference proteome</keyword>
<keyword id="KW-0964">Secreted</keyword>
<keyword id="KW-0720">Serine protease</keyword>
<keyword id="KW-0732">Signal</keyword>
<keyword id="KW-0865">Zymogen</keyword>
<name>DPP2_MOUSE</name>